<name>ECFA_MALP2</name>
<organism>
    <name type="scientific">Malacoplasma penetrans (strain HF-2)</name>
    <name type="common">Mycoplasma penetrans</name>
    <dbReference type="NCBI Taxonomy" id="272633"/>
    <lineage>
        <taxon>Bacteria</taxon>
        <taxon>Bacillati</taxon>
        <taxon>Mycoplasmatota</taxon>
        <taxon>Mycoplasmoidales</taxon>
        <taxon>Mycoplasmoidaceae</taxon>
        <taxon>Malacoplasma</taxon>
    </lineage>
</organism>
<feature type="chain" id="PRO_0000092044" description="Energy-coupling factor transporter ATP-binding protein EcfA">
    <location>
        <begin position="1"/>
        <end position="287"/>
    </location>
</feature>
<feature type="domain" description="ABC transporter" evidence="1">
    <location>
        <begin position="19"/>
        <end position="252"/>
    </location>
</feature>
<feature type="binding site" evidence="1">
    <location>
        <begin position="52"/>
        <end position="59"/>
    </location>
    <ligand>
        <name>ATP</name>
        <dbReference type="ChEBI" id="CHEBI:30616"/>
    </ligand>
</feature>
<gene>
    <name evidence="1" type="primary">ecfA</name>
    <name type="synonym">cbiO</name>
    <name type="ordered locus">MYPE9770</name>
</gene>
<keyword id="KW-0067">ATP-binding</keyword>
<keyword id="KW-1003">Cell membrane</keyword>
<keyword id="KW-0472">Membrane</keyword>
<keyword id="KW-0547">Nucleotide-binding</keyword>
<keyword id="KW-1185">Reference proteome</keyword>
<keyword id="KW-1278">Translocase</keyword>
<keyword id="KW-0813">Transport</keyword>
<protein>
    <recommendedName>
        <fullName evidence="1">Energy-coupling factor transporter ATP-binding protein EcfA</fullName>
        <shortName evidence="1">ECF transporter A component EcfA</shortName>
        <ecNumber evidence="1">7.-.-.-</ecNumber>
    </recommendedName>
</protein>
<comment type="function">
    <text evidence="1">ATP-binding (A) component of a common energy-coupling factor (ECF) ABC-transporter complex. Unlike classic ABC transporters this ECF transporter provides the energy necessary to transport a number of different substrates.</text>
</comment>
<comment type="subunit">
    <text evidence="1">Forms a stable energy-coupling factor (ECF) transporter complex composed of 2 membrane-embedded substrate-binding proteins (S component), 2 ATP-binding proteins (A component) and 2 transmembrane proteins (T component).</text>
</comment>
<comment type="subcellular location">
    <subcellularLocation>
        <location evidence="1">Cell membrane</location>
        <topology evidence="1">Peripheral membrane protein</topology>
    </subcellularLocation>
</comment>
<comment type="similarity">
    <text evidence="1">Belongs to the ABC transporter superfamily. Energy-coupling factor EcfA family.</text>
</comment>
<proteinExistence type="inferred from homology"/>
<evidence type="ECO:0000255" key="1">
    <source>
        <dbReference type="HAMAP-Rule" id="MF_01710"/>
    </source>
</evidence>
<reference key="1">
    <citation type="journal article" date="2002" name="Nucleic Acids Res.">
        <title>The complete genomic sequence of Mycoplasma penetrans, an intracellular bacterial pathogen in humans.</title>
        <authorList>
            <person name="Sasaki Y."/>
            <person name="Ishikawa J."/>
            <person name="Yamashita A."/>
            <person name="Oshima K."/>
            <person name="Kenri T."/>
            <person name="Furuya K."/>
            <person name="Yoshino C."/>
            <person name="Horino A."/>
            <person name="Shiba T."/>
            <person name="Sasaki T."/>
            <person name="Hattori M."/>
        </authorList>
    </citation>
    <scope>NUCLEOTIDE SEQUENCE [LARGE SCALE GENOMIC DNA]</scope>
    <source>
        <strain>HF-2</strain>
    </source>
</reference>
<accession>Q8EUF1</accession>
<sequence length="287" mass="32349">MEKDIKKNEIENKNREKAFEIQNVSFSYDLVNNVLNDVSFDIYENEYVCIIGHNGSGKSTISKVLVGLLKPHQGNLKIFGETISYLNFFHLRTNVGIIFQNPDSQFIGLSAKDDIAFGLENRKINPSVMDDIIESASEVVDIKELLDKDSSSLSGGQKQRVAIASVLATNPRIIIFDESTSMLDPRGKMELKKIMLDLKNKANKTVISITHDMDEVLNADRVIVFKKGQIIRTGKPSEIFTDEEFLASSALDFPFILKLSKELKSKNVNVNFTINKEQLLDQICKKK</sequence>
<dbReference type="EC" id="7.-.-.-" evidence="1"/>
<dbReference type="EMBL" id="BA000026">
    <property type="protein sequence ID" value="BAC44763.1"/>
    <property type="molecule type" value="Genomic_DNA"/>
</dbReference>
<dbReference type="RefSeq" id="WP_011077792.1">
    <property type="nucleotide sequence ID" value="NC_004432.1"/>
</dbReference>
<dbReference type="SMR" id="Q8EUF1"/>
<dbReference type="FunCoup" id="Q8EUF1">
    <property type="interactions" value="151"/>
</dbReference>
<dbReference type="STRING" id="272633.gene:10732097"/>
<dbReference type="KEGG" id="mpe:MYPE9770"/>
<dbReference type="eggNOG" id="COG1122">
    <property type="taxonomic scope" value="Bacteria"/>
</dbReference>
<dbReference type="HOGENOM" id="CLU_000604_1_22_14"/>
<dbReference type="InParanoid" id="Q8EUF1"/>
<dbReference type="Proteomes" id="UP000002522">
    <property type="component" value="Chromosome"/>
</dbReference>
<dbReference type="GO" id="GO:0043190">
    <property type="term" value="C:ATP-binding cassette (ABC) transporter complex"/>
    <property type="evidence" value="ECO:0007669"/>
    <property type="project" value="TreeGrafter"/>
</dbReference>
<dbReference type="GO" id="GO:0005524">
    <property type="term" value="F:ATP binding"/>
    <property type="evidence" value="ECO:0007669"/>
    <property type="project" value="UniProtKB-KW"/>
</dbReference>
<dbReference type="GO" id="GO:0016887">
    <property type="term" value="F:ATP hydrolysis activity"/>
    <property type="evidence" value="ECO:0007669"/>
    <property type="project" value="InterPro"/>
</dbReference>
<dbReference type="GO" id="GO:0042626">
    <property type="term" value="F:ATPase-coupled transmembrane transporter activity"/>
    <property type="evidence" value="ECO:0007669"/>
    <property type="project" value="TreeGrafter"/>
</dbReference>
<dbReference type="CDD" id="cd03225">
    <property type="entry name" value="ABC_cobalt_CbiO_domain1"/>
    <property type="match status" value="1"/>
</dbReference>
<dbReference type="FunFam" id="3.40.50.300:FF:000224">
    <property type="entry name" value="Energy-coupling factor transporter ATP-binding protein EcfA"/>
    <property type="match status" value="1"/>
</dbReference>
<dbReference type="Gene3D" id="3.40.50.300">
    <property type="entry name" value="P-loop containing nucleotide triphosphate hydrolases"/>
    <property type="match status" value="1"/>
</dbReference>
<dbReference type="InterPro" id="IPR003593">
    <property type="entry name" value="AAA+_ATPase"/>
</dbReference>
<dbReference type="InterPro" id="IPR003439">
    <property type="entry name" value="ABC_transporter-like_ATP-bd"/>
</dbReference>
<dbReference type="InterPro" id="IPR017871">
    <property type="entry name" value="ABC_transporter-like_CS"/>
</dbReference>
<dbReference type="InterPro" id="IPR015856">
    <property type="entry name" value="ABC_transpr_CbiO/EcfA_su"/>
</dbReference>
<dbReference type="InterPro" id="IPR050095">
    <property type="entry name" value="ECF_ABC_transporter_ATP-bd"/>
</dbReference>
<dbReference type="InterPro" id="IPR030947">
    <property type="entry name" value="EcfA_1"/>
</dbReference>
<dbReference type="InterPro" id="IPR027417">
    <property type="entry name" value="P-loop_NTPase"/>
</dbReference>
<dbReference type="NCBIfam" id="TIGR04520">
    <property type="entry name" value="ECF_ATPase_1"/>
    <property type="match status" value="1"/>
</dbReference>
<dbReference type="NCBIfam" id="NF010167">
    <property type="entry name" value="PRK13648.1"/>
    <property type="match status" value="1"/>
</dbReference>
<dbReference type="PANTHER" id="PTHR43553:SF24">
    <property type="entry name" value="ENERGY-COUPLING FACTOR TRANSPORTER ATP-BINDING PROTEIN ECFA1"/>
    <property type="match status" value="1"/>
</dbReference>
<dbReference type="PANTHER" id="PTHR43553">
    <property type="entry name" value="HEAVY METAL TRANSPORTER"/>
    <property type="match status" value="1"/>
</dbReference>
<dbReference type="Pfam" id="PF00005">
    <property type="entry name" value="ABC_tran"/>
    <property type="match status" value="1"/>
</dbReference>
<dbReference type="SMART" id="SM00382">
    <property type="entry name" value="AAA"/>
    <property type="match status" value="1"/>
</dbReference>
<dbReference type="SUPFAM" id="SSF52540">
    <property type="entry name" value="P-loop containing nucleoside triphosphate hydrolases"/>
    <property type="match status" value="1"/>
</dbReference>
<dbReference type="PROSITE" id="PS00211">
    <property type="entry name" value="ABC_TRANSPORTER_1"/>
    <property type="match status" value="1"/>
</dbReference>
<dbReference type="PROSITE" id="PS50893">
    <property type="entry name" value="ABC_TRANSPORTER_2"/>
    <property type="match status" value="1"/>
</dbReference>
<dbReference type="PROSITE" id="PS51246">
    <property type="entry name" value="CBIO"/>
    <property type="match status" value="1"/>
</dbReference>